<reference key="1">
    <citation type="submission" date="2007-11" db="EMBL/GenBank/DDBJ databases">
        <authorList>
            <consortium name="NIH - Zebrafish Gene Collection (ZGC) project"/>
        </authorList>
    </citation>
    <scope>NUCLEOTIDE SEQUENCE [LARGE SCALE MRNA] (ISOFORM E)</scope>
    <source>
        <tissue>Brain</tissue>
        <tissue>Embryo</tissue>
    </source>
</reference>
<reference key="2">
    <citation type="journal article" date="2007" name="Dev. Dyn.">
        <title>Differential expression of CaMK-II genes during early zebrafish embryogenesis.</title>
        <authorList>
            <person name="Rothschild S.C."/>
            <person name="Lister J.A."/>
            <person name="Tombes R.M."/>
        </authorList>
    </citation>
    <scope>NUCLEOTIDE SEQUENCE [MRNA] OF 301-446 (ISOFORMS A; E AND O)</scope>
    <scope>ALTERNATIVE SPLICING</scope>
    <scope>TISSUE SPECIFICITY</scope>
</reference>
<comment type="function">
    <text evidence="2 3">CaM-kinase II (CAMK2) is a prominent kinase in the central nervous system.</text>
</comment>
<comment type="catalytic activity">
    <reaction>
        <text>L-seryl-[protein] + ATP = O-phospho-L-seryl-[protein] + ADP + H(+)</text>
        <dbReference type="Rhea" id="RHEA:17989"/>
        <dbReference type="Rhea" id="RHEA-COMP:9863"/>
        <dbReference type="Rhea" id="RHEA-COMP:11604"/>
        <dbReference type="ChEBI" id="CHEBI:15378"/>
        <dbReference type="ChEBI" id="CHEBI:29999"/>
        <dbReference type="ChEBI" id="CHEBI:30616"/>
        <dbReference type="ChEBI" id="CHEBI:83421"/>
        <dbReference type="ChEBI" id="CHEBI:456216"/>
        <dbReference type="EC" id="2.7.11.17"/>
    </reaction>
</comment>
<comment type="catalytic activity">
    <reaction>
        <text>L-threonyl-[protein] + ATP = O-phospho-L-threonyl-[protein] + ADP + H(+)</text>
        <dbReference type="Rhea" id="RHEA:46608"/>
        <dbReference type="Rhea" id="RHEA-COMP:11060"/>
        <dbReference type="Rhea" id="RHEA-COMP:11605"/>
        <dbReference type="ChEBI" id="CHEBI:15378"/>
        <dbReference type="ChEBI" id="CHEBI:30013"/>
        <dbReference type="ChEBI" id="CHEBI:30616"/>
        <dbReference type="ChEBI" id="CHEBI:61977"/>
        <dbReference type="ChEBI" id="CHEBI:456216"/>
        <dbReference type="EC" id="2.7.11.17"/>
    </reaction>
</comment>
<comment type="activity regulation">
    <text evidence="1">Autophosphorylation of CAMK2 plays an important role in the regulation of the kinase activity.</text>
</comment>
<comment type="subunit">
    <text evidence="1">CAMK2 is composed of four different chains: alpha, beta, gamma, and delta. The different isoforms assemble into homo- or heteromultimeric holoenzymes composed of 8 to 12 subunits (By similarity).</text>
</comment>
<comment type="alternative products">
    <event type="alternative splicing"/>
    <isoform>
        <id>Q6DGS3-1</id>
        <name>O</name>
        <sequence type="displayed"/>
    </isoform>
    <isoform>
        <id>Q6DGS3-2</id>
        <name>A</name>
        <sequence type="described" ref="VSP_035557"/>
    </isoform>
    <isoform>
        <id>Q6DGS3-3</id>
        <name>E</name>
        <sequence type="described" ref="VSP_035556 VSP_035557"/>
    </isoform>
</comment>
<comment type="tissue specificity">
    <text evidence="7">First detected at 18 hpf. At 24 hpf, expressed in discrete anterior locations and along either side of the midline. At 48 hpf, expression is predominantly in the forebrain, and then accumulates in the forebrain, hindbrain, and retinal epithelium at 72 hpf.</text>
</comment>
<comment type="similarity">
    <text evidence="10">Belongs to the protein kinase superfamily. CAMK Ser/Thr protein kinase family. CaMK subfamily.</text>
</comment>
<accession>Q6DGS3</accession>
<accession>A8WGM2</accession>
<protein>
    <recommendedName>
        <fullName>Calcium/calmodulin-dependent protein kinase type II delta 2 chain</fullName>
        <ecNumber>2.7.11.17</ecNumber>
    </recommendedName>
    <alternativeName>
        <fullName>Calcium/calmodulin-dependent protein kinase type II delta-A chain</fullName>
        <shortName>CaM kinase II subunit delta-A</shortName>
        <shortName>CaM-kinase II delta-A chain</shortName>
        <shortName>CaMK-II subunit delta-A</shortName>
    </alternativeName>
</protein>
<evidence type="ECO:0000250" key="1"/>
<evidence type="ECO:0000250" key="2">
    <source>
        <dbReference type="UniProtKB" id="Q13557"/>
    </source>
</evidence>
<evidence type="ECO:0000250" key="3">
    <source>
        <dbReference type="UniProtKB" id="Q6PHZ2"/>
    </source>
</evidence>
<evidence type="ECO:0000255" key="4">
    <source>
        <dbReference type="PROSITE-ProRule" id="PRU00159"/>
    </source>
</evidence>
<evidence type="ECO:0000255" key="5">
    <source>
        <dbReference type="PROSITE-ProRule" id="PRU10027"/>
    </source>
</evidence>
<evidence type="ECO:0000256" key="6">
    <source>
        <dbReference type="SAM" id="MobiDB-lite"/>
    </source>
</evidence>
<evidence type="ECO:0000269" key="7">
    <source>
    </source>
</evidence>
<evidence type="ECO:0000303" key="8">
    <source>
    </source>
</evidence>
<evidence type="ECO:0000303" key="9">
    <source ref="1"/>
</evidence>
<evidence type="ECO:0000305" key="10"/>
<name>KC2D2_DANRE</name>
<gene>
    <name type="primary">camk2d2</name>
    <name type="synonym">camk2d</name>
    <name type="synonym">camk2da</name>
    <name type="ORF">zgc:92792</name>
</gene>
<dbReference type="EC" id="2.7.11.17"/>
<dbReference type="EMBL" id="BC076266">
    <property type="protein sequence ID" value="AAH76266.1"/>
    <property type="molecule type" value="mRNA"/>
</dbReference>
<dbReference type="EMBL" id="BC154768">
    <property type="protein sequence ID" value="AAI54769.1"/>
    <property type="molecule type" value="mRNA"/>
</dbReference>
<dbReference type="RefSeq" id="NP_001002542.1">
    <molecule id="Q6DGS3-3"/>
    <property type="nucleotide sequence ID" value="NM_001002542.1"/>
</dbReference>
<dbReference type="SMR" id="Q6DGS3"/>
<dbReference type="FunCoup" id="Q6DGS3">
    <property type="interactions" value="450"/>
</dbReference>
<dbReference type="STRING" id="7955.ENSDARP00000044895"/>
<dbReference type="PaxDb" id="7955-ENSDARP00000044895"/>
<dbReference type="GeneID" id="436815"/>
<dbReference type="KEGG" id="dre:436815"/>
<dbReference type="AGR" id="ZFIN:ZDB-GENE-040718-277"/>
<dbReference type="CTD" id="436815"/>
<dbReference type="ZFIN" id="ZDB-GENE-040718-277">
    <property type="gene designation" value="camk2d2"/>
</dbReference>
<dbReference type="eggNOG" id="KOG0033">
    <property type="taxonomic scope" value="Eukaryota"/>
</dbReference>
<dbReference type="InParanoid" id="Q6DGS3"/>
<dbReference type="OrthoDB" id="336747at2759"/>
<dbReference type="PhylomeDB" id="Q6DGS3"/>
<dbReference type="Reactome" id="R-DRE-438066">
    <property type="pathway name" value="Unblocking of NMDA receptors, glutamate binding and activation"/>
</dbReference>
<dbReference type="Reactome" id="R-DRE-877300">
    <property type="pathway name" value="Interferon gamma signaling"/>
</dbReference>
<dbReference type="PRO" id="PR:Q6DGS3"/>
<dbReference type="Proteomes" id="UP000000437">
    <property type="component" value="Chromosome 1"/>
</dbReference>
<dbReference type="GO" id="GO:0005737">
    <property type="term" value="C:cytoplasm"/>
    <property type="evidence" value="ECO:0000318"/>
    <property type="project" value="GO_Central"/>
</dbReference>
<dbReference type="GO" id="GO:0043005">
    <property type="term" value="C:neuron projection"/>
    <property type="evidence" value="ECO:0000318"/>
    <property type="project" value="GO_Central"/>
</dbReference>
<dbReference type="GO" id="GO:0014069">
    <property type="term" value="C:postsynaptic density"/>
    <property type="evidence" value="ECO:0000318"/>
    <property type="project" value="GO_Central"/>
</dbReference>
<dbReference type="GO" id="GO:0005524">
    <property type="term" value="F:ATP binding"/>
    <property type="evidence" value="ECO:0007669"/>
    <property type="project" value="UniProtKB-KW"/>
</dbReference>
<dbReference type="GO" id="GO:0004683">
    <property type="term" value="F:calcium/calmodulin-dependent protein kinase activity"/>
    <property type="evidence" value="ECO:0000318"/>
    <property type="project" value="GO_Central"/>
</dbReference>
<dbReference type="GO" id="GO:0005516">
    <property type="term" value="F:calmodulin binding"/>
    <property type="evidence" value="ECO:0000318"/>
    <property type="project" value="GO_Central"/>
</dbReference>
<dbReference type="GO" id="GO:0106310">
    <property type="term" value="F:protein serine kinase activity"/>
    <property type="evidence" value="ECO:0007669"/>
    <property type="project" value="RHEA"/>
</dbReference>
<dbReference type="GO" id="GO:0048168">
    <property type="term" value="P:regulation of neuronal synaptic plasticity"/>
    <property type="evidence" value="ECO:0000318"/>
    <property type="project" value="GO_Central"/>
</dbReference>
<dbReference type="GO" id="GO:1903076">
    <property type="term" value="P:regulation of protein localization to plasma membrane"/>
    <property type="evidence" value="ECO:0000318"/>
    <property type="project" value="GO_Central"/>
</dbReference>
<dbReference type="CDD" id="cd14086">
    <property type="entry name" value="STKc_CaMKII"/>
    <property type="match status" value="1"/>
</dbReference>
<dbReference type="FunFam" id="1.10.510.10:FF:000001">
    <property type="entry name" value="Calcium/calmodulin-dependent protein kinase type II subunit delta"/>
    <property type="match status" value="1"/>
</dbReference>
<dbReference type="FunFam" id="3.30.200.20:FF:000002">
    <property type="entry name" value="Calcium/calmodulin-dependent protein kinase type II subunit delta isoform 2"/>
    <property type="match status" value="1"/>
</dbReference>
<dbReference type="FunFam" id="3.10.450.50:FF:000001">
    <property type="entry name" value="calcium/calmodulin-dependent protein kinase type II subunit gamma isoform X1"/>
    <property type="match status" value="1"/>
</dbReference>
<dbReference type="Gene3D" id="3.10.450.50">
    <property type="match status" value="1"/>
</dbReference>
<dbReference type="Gene3D" id="6.10.140.620">
    <property type="match status" value="1"/>
</dbReference>
<dbReference type="Gene3D" id="3.30.200.20">
    <property type="entry name" value="Phosphorylase Kinase, domain 1"/>
    <property type="match status" value="1"/>
</dbReference>
<dbReference type="Gene3D" id="1.10.510.10">
    <property type="entry name" value="Transferase(Phosphotransferase) domain 1"/>
    <property type="match status" value="1"/>
</dbReference>
<dbReference type="InterPro" id="IPR013543">
    <property type="entry name" value="Ca/CaM-dep_prot_kinase-assoc"/>
</dbReference>
<dbReference type="InterPro" id="IPR011009">
    <property type="entry name" value="Kinase-like_dom_sf"/>
</dbReference>
<dbReference type="InterPro" id="IPR032710">
    <property type="entry name" value="NTF2-like_dom_sf"/>
</dbReference>
<dbReference type="InterPro" id="IPR000719">
    <property type="entry name" value="Prot_kinase_dom"/>
</dbReference>
<dbReference type="InterPro" id="IPR017441">
    <property type="entry name" value="Protein_kinase_ATP_BS"/>
</dbReference>
<dbReference type="InterPro" id="IPR008271">
    <property type="entry name" value="Ser/Thr_kinase_AS"/>
</dbReference>
<dbReference type="PANTHER" id="PTHR24347">
    <property type="entry name" value="SERINE/THREONINE-PROTEIN KINASE"/>
    <property type="match status" value="1"/>
</dbReference>
<dbReference type="Pfam" id="PF08332">
    <property type="entry name" value="CaMKII_AD"/>
    <property type="match status" value="1"/>
</dbReference>
<dbReference type="Pfam" id="PF00069">
    <property type="entry name" value="Pkinase"/>
    <property type="match status" value="1"/>
</dbReference>
<dbReference type="SMART" id="SM00220">
    <property type="entry name" value="S_TKc"/>
    <property type="match status" value="1"/>
</dbReference>
<dbReference type="SUPFAM" id="SSF54427">
    <property type="entry name" value="NTF2-like"/>
    <property type="match status" value="1"/>
</dbReference>
<dbReference type="SUPFAM" id="SSF56112">
    <property type="entry name" value="Protein kinase-like (PK-like)"/>
    <property type="match status" value="1"/>
</dbReference>
<dbReference type="PROSITE" id="PS00107">
    <property type="entry name" value="PROTEIN_KINASE_ATP"/>
    <property type="match status" value="1"/>
</dbReference>
<dbReference type="PROSITE" id="PS50011">
    <property type="entry name" value="PROTEIN_KINASE_DOM"/>
    <property type="match status" value="1"/>
</dbReference>
<dbReference type="PROSITE" id="PS00108">
    <property type="entry name" value="PROTEIN_KINASE_ST"/>
    <property type="match status" value="1"/>
</dbReference>
<keyword id="KW-0025">Alternative splicing</keyword>
<keyword id="KW-0067">ATP-binding</keyword>
<keyword id="KW-0112">Calmodulin-binding</keyword>
<keyword id="KW-0418">Kinase</keyword>
<keyword id="KW-0547">Nucleotide-binding</keyword>
<keyword id="KW-0597">Phosphoprotein</keyword>
<keyword id="KW-1185">Reference proteome</keyword>
<keyword id="KW-0723">Serine/threonine-protein kinase</keyword>
<keyword id="KW-0808">Transferase</keyword>
<organism>
    <name type="scientific">Danio rerio</name>
    <name type="common">Zebrafish</name>
    <name type="synonym">Brachydanio rerio</name>
    <dbReference type="NCBI Taxonomy" id="7955"/>
    <lineage>
        <taxon>Eukaryota</taxon>
        <taxon>Metazoa</taxon>
        <taxon>Chordata</taxon>
        <taxon>Craniata</taxon>
        <taxon>Vertebrata</taxon>
        <taxon>Euteleostomi</taxon>
        <taxon>Actinopterygii</taxon>
        <taxon>Neopterygii</taxon>
        <taxon>Teleostei</taxon>
        <taxon>Ostariophysi</taxon>
        <taxon>Cypriniformes</taxon>
        <taxon>Danionidae</taxon>
        <taxon>Danioninae</taxon>
        <taxon>Danio</taxon>
    </lineage>
</organism>
<proteinExistence type="evidence at transcript level"/>
<feature type="chain" id="PRO_0000277821" description="Calcium/calmodulin-dependent protein kinase type II delta 2 chain">
    <location>
        <begin position="1"/>
        <end position="554"/>
    </location>
</feature>
<feature type="domain" description="Protein kinase" evidence="4">
    <location>
        <begin position="13"/>
        <end position="271"/>
    </location>
</feature>
<feature type="region of interest" description="Disordered" evidence="6">
    <location>
        <begin position="324"/>
        <end position="375"/>
    </location>
</feature>
<feature type="region of interest" description="Disordered" evidence="6">
    <location>
        <begin position="392"/>
        <end position="413"/>
    </location>
</feature>
<feature type="compositionally biased region" description="Polar residues" evidence="6">
    <location>
        <begin position="330"/>
        <end position="340"/>
    </location>
</feature>
<feature type="active site" description="Proton acceptor" evidence="4 5">
    <location>
        <position position="135"/>
    </location>
</feature>
<feature type="binding site" evidence="4">
    <location>
        <begin position="19"/>
        <end position="27"/>
    </location>
    <ligand>
        <name>ATP</name>
        <dbReference type="ChEBI" id="CHEBI:30616"/>
    </ligand>
</feature>
<feature type="binding site" evidence="4">
    <location>
        <position position="42"/>
    </location>
    <ligand>
        <name>ATP</name>
        <dbReference type="ChEBI" id="CHEBI:30616"/>
    </ligand>
</feature>
<feature type="modified residue" description="Phosphothreonine" evidence="1">
    <location>
        <position position="286"/>
    </location>
</feature>
<feature type="modified residue" description="Phosphoserine" evidence="1">
    <location>
        <position position="314"/>
    </location>
</feature>
<feature type="modified residue" description="Phosphoserine" evidence="1">
    <location>
        <position position="318"/>
    </location>
</feature>
<feature type="modified residue" description="Phosphothreonine" evidence="1">
    <location>
        <position position="372"/>
    </location>
</feature>
<feature type="splice variant" id="VSP_035556" description="In isoform E." evidence="8 9">
    <location>
        <begin position="329"/>
        <end position="348"/>
    </location>
</feature>
<feature type="splice variant" id="VSP_035557" description="In isoform A and isoform E." evidence="8 9">
    <location>
        <begin position="379"/>
        <end position="419"/>
    </location>
</feature>
<feature type="sequence conflict" description="In Ref. 1; AAI54769." evidence="10" ref="1">
    <original>P</original>
    <variation>L</variation>
    <location>
        <position position="266"/>
    </location>
</feature>
<sequence length="554" mass="62384">MALTICTRFTDEYQLFEELGKGAFSVVRRCVKISSGQEYAAKIINTKKLSARDHQKLEREARICRLLKHPNIVRLHDSISEEGFHYLVFDLVTGGELFEDIVAREYYSEADASHCIQQILESVHHCHVNGIVHRDLKPENLLLASKMKGAAVKLADFGLAIEVQGDQQAWFGFAGTPGYLSPEVLRKDPYGKPVDMWACGVILYILLVGYPPFWDEDQHRLYQQIKAGAYDFPSPEWDTVTPEAKDLINKMLTINPSKRITAAEAPKHPWICQRSTVASMMHRQETVECLKKFNARRKLKGAILTTLLVTRNFSAAKSLLNKKPDGVKVNNKTNLASSPKDTGPAPALEPQTTVIHNPVDRNKESTESANTTIEDEDLKARRFGNLSINSIWQPSVGRPQNSEPKQAPNSSVQTCQVINKARKQEIIKVTEQLIESINNGDFEAYAKICDPGLTSFEPEALGNLVEGHDFHRFYFENALSKGNKPVHTILLNPHVHLIGEDAACIAYIRLTQYMDGSGMPRTMQSEETRVWHRRDGKWLNIHFHRSGAPSVPIN</sequence>